<organism>
    <name type="scientific">Bacillus cereus (strain ATCC 10987 / NRS 248)</name>
    <dbReference type="NCBI Taxonomy" id="222523"/>
    <lineage>
        <taxon>Bacteria</taxon>
        <taxon>Bacillati</taxon>
        <taxon>Bacillota</taxon>
        <taxon>Bacilli</taxon>
        <taxon>Bacillales</taxon>
        <taxon>Bacillaceae</taxon>
        <taxon>Bacillus</taxon>
        <taxon>Bacillus cereus group</taxon>
    </lineage>
</organism>
<reference key="1">
    <citation type="journal article" date="2004" name="Nucleic Acids Res.">
        <title>The genome sequence of Bacillus cereus ATCC 10987 reveals metabolic adaptations and a large plasmid related to Bacillus anthracis pXO1.</title>
        <authorList>
            <person name="Rasko D.A."/>
            <person name="Ravel J."/>
            <person name="Oekstad O.A."/>
            <person name="Helgason E."/>
            <person name="Cer R.Z."/>
            <person name="Jiang L."/>
            <person name="Shores K.A."/>
            <person name="Fouts D.E."/>
            <person name="Tourasse N.J."/>
            <person name="Angiuoli S.V."/>
            <person name="Kolonay J.F."/>
            <person name="Nelson W.C."/>
            <person name="Kolstoe A.-B."/>
            <person name="Fraser C.M."/>
            <person name="Read T.D."/>
        </authorList>
    </citation>
    <scope>NUCLEOTIDE SEQUENCE [LARGE SCALE GENOMIC DNA]</scope>
    <source>
        <strain>ATCC 10987 / NRS 248</strain>
    </source>
</reference>
<sequence>MEVTDVRLRRVNTEGRMRAIASITLDHEFVVHDIRVIDGNNGLFVAMPSKRTPDGEFRDIAHPINSGTRSKIQDAVLTEYHRLGELEEVEFEEAGAS</sequence>
<name>SP5G_BACC1</name>
<feature type="chain" id="PRO_0000157181" description="Putative septation protein SpoVG">
    <location>
        <begin position="1"/>
        <end position="97"/>
    </location>
</feature>
<evidence type="ECO:0000255" key="1">
    <source>
        <dbReference type="HAMAP-Rule" id="MF_00819"/>
    </source>
</evidence>
<evidence type="ECO:0000305" key="2"/>
<keyword id="KW-0131">Cell cycle</keyword>
<keyword id="KW-0132">Cell division</keyword>
<keyword id="KW-0717">Septation</keyword>
<keyword id="KW-0749">Sporulation</keyword>
<protein>
    <recommendedName>
        <fullName evidence="1">Putative septation protein SpoVG</fullName>
    </recommendedName>
    <alternativeName>
        <fullName evidence="1">Stage V sporulation protein G</fullName>
    </alternativeName>
</protein>
<dbReference type="EMBL" id="AE017194">
    <property type="protein sequence ID" value="AAS38982.1"/>
    <property type="status" value="ALT_INIT"/>
    <property type="molecule type" value="Genomic_DNA"/>
</dbReference>
<dbReference type="SMR" id="Q73FG0"/>
<dbReference type="KEGG" id="bca:BCE_0046"/>
<dbReference type="HOGENOM" id="CLU_103669_2_1_9"/>
<dbReference type="Proteomes" id="UP000002527">
    <property type="component" value="Chromosome"/>
</dbReference>
<dbReference type="GO" id="GO:0030436">
    <property type="term" value="P:asexual sporulation"/>
    <property type="evidence" value="ECO:0007669"/>
    <property type="project" value="UniProtKB-UniRule"/>
</dbReference>
<dbReference type="GO" id="GO:0000917">
    <property type="term" value="P:division septum assembly"/>
    <property type="evidence" value="ECO:0007669"/>
    <property type="project" value="UniProtKB-KW"/>
</dbReference>
<dbReference type="GO" id="GO:0030435">
    <property type="term" value="P:sporulation resulting in formation of a cellular spore"/>
    <property type="evidence" value="ECO:0007669"/>
    <property type="project" value="UniProtKB-KW"/>
</dbReference>
<dbReference type="FunFam" id="3.30.1120.40:FF:000001">
    <property type="entry name" value="Putative septation protein SpoVG"/>
    <property type="match status" value="1"/>
</dbReference>
<dbReference type="Gene3D" id="3.30.1120.40">
    <property type="entry name" value="Stage V sporulation protein G"/>
    <property type="match status" value="1"/>
</dbReference>
<dbReference type="HAMAP" id="MF_00819">
    <property type="entry name" value="SpoVG"/>
    <property type="match status" value="1"/>
</dbReference>
<dbReference type="InterPro" id="IPR007170">
    <property type="entry name" value="SpoVG"/>
</dbReference>
<dbReference type="InterPro" id="IPR036751">
    <property type="entry name" value="SpoVG_sf"/>
</dbReference>
<dbReference type="NCBIfam" id="NF009749">
    <property type="entry name" value="PRK13259.1"/>
    <property type="match status" value="1"/>
</dbReference>
<dbReference type="PANTHER" id="PTHR38429">
    <property type="entry name" value="SEPTATION PROTEIN SPOVG-RELATED"/>
    <property type="match status" value="1"/>
</dbReference>
<dbReference type="PANTHER" id="PTHR38429:SF1">
    <property type="entry name" value="SEPTATION PROTEIN SPOVG-RELATED"/>
    <property type="match status" value="1"/>
</dbReference>
<dbReference type="Pfam" id="PF04026">
    <property type="entry name" value="SpoVG"/>
    <property type="match status" value="1"/>
</dbReference>
<dbReference type="SUPFAM" id="SSF160537">
    <property type="entry name" value="SpoVG-like"/>
    <property type="match status" value="1"/>
</dbReference>
<comment type="function">
    <text evidence="1">Essential for sporulation. Interferes with or is a negative regulator of the pathway leading to asymmetric septation.</text>
</comment>
<comment type="similarity">
    <text evidence="1">Belongs to the SpoVG family.</text>
</comment>
<comment type="sequence caution" evidence="2">
    <conflict type="erroneous initiation">
        <sequence resource="EMBL-CDS" id="AAS38982"/>
    </conflict>
</comment>
<gene>
    <name evidence="1" type="primary">spoVG</name>
    <name type="ordered locus">BCE_0046</name>
</gene>
<proteinExistence type="inferred from homology"/>
<accession>Q73FG0</accession>